<keyword id="KW-0004">4Fe-4S</keyword>
<keyword id="KW-0067">ATP-binding</keyword>
<keyword id="KW-0149">Chlorophyll biosynthesis</keyword>
<keyword id="KW-0150">Chloroplast</keyword>
<keyword id="KW-0408">Iron</keyword>
<keyword id="KW-0411">Iron-sulfur</keyword>
<keyword id="KW-0460">Magnesium</keyword>
<keyword id="KW-0479">Metal-binding</keyword>
<keyword id="KW-0547">Nucleotide-binding</keyword>
<keyword id="KW-0560">Oxidoreductase</keyword>
<keyword id="KW-0602">Photosynthesis</keyword>
<keyword id="KW-0934">Plastid</keyword>
<evidence type="ECO:0000250" key="1"/>
<evidence type="ECO:0000305" key="2"/>
<name>CHLL_POLAC</name>
<accession>P36439</accession>
<comment type="function">
    <text evidence="1">Component of the dark-operative protochlorophyllide reductase (DPOR) that uses Mg-ATP and reduced ferredoxin to reduce ring D of protochlorophyllide (Pchlide) to form chlorophyllide a (Chlide). This reaction is light-independent. The L component serves as a unique electron donor to the NB-component of the complex, and binds Mg-ATP (By similarity).</text>
</comment>
<comment type="catalytic activity">
    <reaction>
        <text>chlorophyllide a + oxidized 2[4Fe-4S]-[ferredoxin] + 2 ADP + 2 phosphate = protochlorophyllide a + reduced 2[4Fe-4S]-[ferredoxin] + 2 ATP + 2 H2O</text>
        <dbReference type="Rhea" id="RHEA:28202"/>
        <dbReference type="Rhea" id="RHEA-COMP:10002"/>
        <dbReference type="Rhea" id="RHEA-COMP:10004"/>
        <dbReference type="ChEBI" id="CHEBI:15377"/>
        <dbReference type="ChEBI" id="CHEBI:30616"/>
        <dbReference type="ChEBI" id="CHEBI:33722"/>
        <dbReference type="ChEBI" id="CHEBI:33723"/>
        <dbReference type="ChEBI" id="CHEBI:43474"/>
        <dbReference type="ChEBI" id="CHEBI:83348"/>
        <dbReference type="ChEBI" id="CHEBI:83350"/>
        <dbReference type="ChEBI" id="CHEBI:456216"/>
        <dbReference type="EC" id="1.3.7.7"/>
    </reaction>
</comment>
<comment type="cofactor">
    <cofactor evidence="1">
        <name>[4Fe-4S] cluster</name>
        <dbReference type="ChEBI" id="CHEBI:49883"/>
    </cofactor>
    <text evidence="1">Binds 1 [4Fe-4S] cluster per dimer.</text>
</comment>
<comment type="pathway">
    <text>Porphyrin-containing compound metabolism; chlorophyll biosynthesis (light-independent).</text>
</comment>
<comment type="subunit">
    <text evidence="1">Homodimer. Protochlorophyllide reductase is composed of three subunits; ChlL, ChlN and ChlB (By similarity).</text>
</comment>
<comment type="subcellular location">
    <subcellularLocation>
        <location>Plastid</location>
        <location>Chloroplast</location>
    </subcellularLocation>
</comment>
<comment type="similarity">
    <text evidence="2">Belongs to the NifH/BchL/ChlL family.</text>
</comment>
<proteinExistence type="inferred from homology"/>
<dbReference type="EC" id="1.3.7.7"/>
<dbReference type="EMBL" id="U00732">
    <property type="protein sequence ID" value="AAA67136.1"/>
    <property type="molecule type" value="Genomic_DNA"/>
</dbReference>
<dbReference type="SMR" id="P36439"/>
<dbReference type="UniPathway" id="UPA00670"/>
<dbReference type="GO" id="GO:0009507">
    <property type="term" value="C:chloroplast"/>
    <property type="evidence" value="ECO:0007669"/>
    <property type="project" value="UniProtKB-SubCell"/>
</dbReference>
<dbReference type="GO" id="GO:0051539">
    <property type="term" value="F:4 iron, 4 sulfur cluster binding"/>
    <property type="evidence" value="ECO:0007669"/>
    <property type="project" value="UniProtKB-KW"/>
</dbReference>
<dbReference type="GO" id="GO:0005524">
    <property type="term" value="F:ATP binding"/>
    <property type="evidence" value="ECO:0007669"/>
    <property type="project" value="UniProtKB-KW"/>
</dbReference>
<dbReference type="GO" id="GO:0046872">
    <property type="term" value="F:metal ion binding"/>
    <property type="evidence" value="ECO:0007669"/>
    <property type="project" value="UniProtKB-KW"/>
</dbReference>
<dbReference type="GO" id="GO:0016491">
    <property type="term" value="F:oxidoreductase activity"/>
    <property type="evidence" value="ECO:0007669"/>
    <property type="project" value="UniProtKB-KW"/>
</dbReference>
<dbReference type="GO" id="GO:0036068">
    <property type="term" value="P:light-independent chlorophyll biosynthetic process"/>
    <property type="evidence" value="ECO:0007669"/>
    <property type="project" value="UniProtKB-UniPathway"/>
</dbReference>
<dbReference type="GO" id="GO:0015979">
    <property type="term" value="P:photosynthesis"/>
    <property type="evidence" value="ECO:0007669"/>
    <property type="project" value="UniProtKB-KW"/>
</dbReference>
<dbReference type="Gene3D" id="3.40.50.300">
    <property type="entry name" value="P-loop containing nucleotide triphosphate hydrolases"/>
    <property type="match status" value="1"/>
</dbReference>
<dbReference type="InterPro" id="IPR030655">
    <property type="entry name" value="NifH/chlL_CS"/>
</dbReference>
<dbReference type="InterPro" id="IPR000392">
    <property type="entry name" value="NifH/frxC"/>
</dbReference>
<dbReference type="InterPro" id="IPR027417">
    <property type="entry name" value="P-loop_NTPase"/>
</dbReference>
<dbReference type="PANTHER" id="PTHR42864">
    <property type="entry name" value="LIGHT-INDEPENDENT PROTOCHLOROPHYLLIDE REDUCTASE IRON-SULFUR ATP-BINDING PROTEIN"/>
    <property type="match status" value="1"/>
</dbReference>
<dbReference type="PANTHER" id="PTHR42864:SF2">
    <property type="entry name" value="LIGHT-INDEPENDENT PROTOCHLOROPHYLLIDE REDUCTASE IRON-SULFUR ATP-BINDING PROTEIN"/>
    <property type="match status" value="1"/>
</dbReference>
<dbReference type="Pfam" id="PF00142">
    <property type="entry name" value="Fer4_NifH"/>
    <property type="match status" value="1"/>
</dbReference>
<dbReference type="PRINTS" id="PR00091">
    <property type="entry name" value="NITROGNASEII"/>
</dbReference>
<dbReference type="SUPFAM" id="SSF52540">
    <property type="entry name" value="P-loop containing nucleoside triphosphate hydrolases"/>
    <property type="match status" value="1"/>
</dbReference>
<dbReference type="PROSITE" id="PS00746">
    <property type="entry name" value="NIFH_FRXC_1"/>
    <property type="match status" value="1"/>
</dbReference>
<dbReference type="PROSITE" id="PS00692">
    <property type="entry name" value="NIFH_FRXC_2"/>
    <property type="match status" value="1"/>
</dbReference>
<dbReference type="PROSITE" id="PS51026">
    <property type="entry name" value="NIFH_FRXC_3"/>
    <property type="match status" value="1"/>
</dbReference>
<feature type="chain" id="PRO_0000139567" description="Light-independent protochlorophyllide reductase iron-sulfur ATP-binding protein">
    <location>
        <begin position="1"/>
        <end position="160" status="greater than"/>
    </location>
</feature>
<feature type="binding site" evidence="1">
    <location>
        <begin position="15"/>
        <end position="20"/>
    </location>
    <ligand>
        <name>ATP</name>
        <dbReference type="ChEBI" id="CHEBI:30616"/>
    </ligand>
</feature>
<feature type="binding site" evidence="1">
    <location>
        <position position="19"/>
    </location>
    <ligand>
        <name>Mg(2+)</name>
        <dbReference type="ChEBI" id="CHEBI:18420"/>
    </ligand>
</feature>
<feature type="binding site" evidence="1">
    <location>
        <position position="44"/>
    </location>
    <ligand>
        <name>ATP</name>
        <dbReference type="ChEBI" id="CHEBI:30616"/>
    </ligand>
</feature>
<feature type="binding site" evidence="1">
    <location>
        <position position="100"/>
    </location>
    <ligand>
        <name>[4Fe-4S] cluster</name>
        <dbReference type="ChEBI" id="CHEBI:49883"/>
        <note>ligand shared between dimeric partners</note>
    </ligand>
</feature>
<feature type="binding site" evidence="1">
    <location>
        <position position="134"/>
    </location>
    <ligand>
        <name>[4Fe-4S] cluster</name>
        <dbReference type="ChEBI" id="CHEBI:49883"/>
        <note>ligand shared between dimeric partners</note>
    </ligand>
</feature>
<feature type="non-terminal residue">
    <location>
        <position position="160"/>
    </location>
</feature>
<organism>
    <name type="scientific">Polystichum acrostichoides</name>
    <name type="common">Christmas fern</name>
    <name type="synonym">Nephrodium acrostichoides</name>
    <dbReference type="NCBI Taxonomy" id="28470"/>
    <lineage>
        <taxon>Eukaryota</taxon>
        <taxon>Viridiplantae</taxon>
        <taxon>Streptophyta</taxon>
        <taxon>Embryophyta</taxon>
        <taxon>Tracheophyta</taxon>
        <taxon>Polypodiopsida</taxon>
        <taxon>Polypodiidae</taxon>
        <taxon>Polypodiales</taxon>
        <taxon>Polypodiineae</taxon>
        <taxon>Dryopteridaceae</taxon>
        <taxon>Dryopteridoideae</taxon>
        <taxon>Polystichum</taxon>
    </lineage>
</organism>
<sequence length="160" mass="17083">MELRETKVAVYGKGGIGKSTTSCNTSIALARRGRRILQIGCDPKHDSTFTPTGFSIPTIIDTSQSKDYHYEDVWPEDVIHRGYGGVDCVEAGGPPAGAGCGGYVVGETVKPLKESNAFYEYDIILFDVLGDVVCGGFAAPLNYADYCIIITDNGFDALSA</sequence>
<geneLocation type="chloroplast"/>
<reference key="1">
    <citation type="journal article" date="1993" name="Plant Syst. Evol.">
        <title>The chlL (frxC) gene: phylogenetic distribution in vascular plants and DNA sequence from Polystichum acrostichoides (Pteridophyta) and Synechococcus sp. 7002 (Cyanobacteria).</title>
        <authorList>
            <person name="Burke D.H."/>
            <person name="Raubeson L.A."/>
            <person name="Alberti M."/>
            <person name="Hearst J.E."/>
            <person name="Jordan E.T."/>
            <person name="Kirch S.A."/>
            <person name="Valinski A.E.C."/>
            <person name="Conant D.S."/>
            <person name="Stein D.B."/>
        </authorList>
        <dbReference type="AGRICOLA" id="IND20364704"/>
    </citation>
    <scope>NUCLEOTIDE SEQUENCE [GENOMIC DNA]</scope>
    <source>
        <tissue>Leaf</tissue>
    </source>
</reference>
<protein>
    <recommendedName>
        <fullName>Light-independent protochlorophyllide reductase iron-sulfur ATP-binding protein</fullName>
        <shortName>DPOR subunit L</shortName>
        <shortName>LI-POR subunit L</shortName>
        <ecNumber>1.3.7.7</ecNumber>
    </recommendedName>
</protein>
<gene>
    <name type="primary">chlL</name>
    <name type="synonym">frxC</name>
</gene>